<evidence type="ECO:0000255" key="1">
    <source>
        <dbReference type="HAMAP-Rule" id="MF_00501"/>
    </source>
</evidence>
<evidence type="ECO:0000305" key="2"/>
<reference key="1">
    <citation type="submission" date="2006-08" db="EMBL/GenBank/DDBJ databases">
        <title>Complete sequence of Shewanella frigidimarina NCIMB 400.</title>
        <authorList>
            <consortium name="US DOE Joint Genome Institute"/>
            <person name="Copeland A."/>
            <person name="Lucas S."/>
            <person name="Lapidus A."/>
            <person name="Barry K."/>
            <person name="Detter J.C."/>
            <person name="Glavina del Rio T."/>
            <person name="Hammon N."/>
            <person name="Israni S."/>
            <person name="Dalin E."/>
            <person name="Tice H."/>
            <person name="Pitluck S."/>
            <person name="Fredrickson J.K."/>
            <person name="Kolker E."/>
            <person name="McCuel L.A."/>
            <person name="DiChristina T."/>
            <person name="Nealson K.H."/>
            <person name="Newman D."/>
            <person name="Tiedje J.M."/>
            <person name="Zhou J."/>
            <person name="Romine M.F."/>
            <person name="Culley D.E."/>
            <person name="Serres M."/>
            <person name="Chertkov O."/>
            <person name="Brettin T."/>
            <person name="Bruce D."/>
            <person name="Han C."/>
            <person name="Tapia R."/>
            <person name="Gilna P."/>
            <person name="Schmutz J."/>
            <person name="Larimer F."/>
            <person name="Land M."/>
            <person name="Hauser L."/>
            <person name="Kyrpides N."/>
            <person name="Mikhailova N."/>
            <person name="Richardson P."/>
        </authorList>
    </citation>
    <scope>NUCLEOTIDE SEQUENCE [LARGE SCALE GENOMIC DNA]</scope>
    <source>
        <strain>NCIMB 400</strain>
    </source>
</reference>
<proteinExistence type="inferred from homology"/>
<dbReference type="EMBL" id="CP000447">
    <property type="protein sequence ID" value="ABI73585.1"/>
    <property type="molecule type" value="Genomic_DNA"/>
</dbReference>
<dbReference type="RefSeq" id="WP_011639173.1">
    <property type="nucleotide sequence ID" value="NC_008345.1"/>
</dbReference>
<dbReference type="SMR" id="Q07WM9"/>
<dbReference type="STRING" id="318167.Sfri_3758"/>
<dbReference type="GeneID" id="90569311"/>
<dbReference type="KEGG" id="sfr:Sfri_3758"/>
<dbReference type="eggNOG" id="COG0254">
    <property type="taxonomic scope" value="Bacteria"/>
</dbReference>
<dbReference type="HOGENOM" id="CLU_114306_4_3_6"/>
<dbReference type="OrthoDB" id="9803251at2"/>
<dbReference type="Proteomes" id="UP000000684">
    <property type="component" value="Chromosome"/>
</dbReference>
<dbReference type="GO" id="GO:1990904">
    <property type="term" value="C:ribonucleoprotein complex"/>
    <property type="evidence" value="ECO:0007669"/>
    <property type="project" value="UniProtKB-KW"/>
</dbReference>
<dbReference type="GO" id="GO:0005840">
    <property type="term" value="C:ribosome"/>
    <property type="evidence" value="ECO:0007669"/>
    <property type="project" value="UniProtKB-KW"/>
</dbReference>
<dbReference type="GO" id="GO:0046872">
    <property type="term" value="F:metal ion binding"/>
    <property type="evidence" value="ECO:0007669"/>
    <property type="project" value="UniProtKB-KW"/>
</dbReference>
<dbReference type="GO" id="GO:0019843">
    <property type="term" value="F:rRNA binding"/>
    <property type="evidence" value="ECO:0007669"/>
    <property type="project" value="UniProtKB-KW"/>
</dbReference>
<dbReference type="GO" id="GO:0003735">
    <property type="term" value="F:structural constituent of ribosome"/>
    <property type="evidence" value="ECO:0007669"/>
    <property type="project" value="InterPro"/>
</dbReference>
<dbReference type="GO" id="GO:0006412">
    <property type="term" value="P:translation"/>
    <property type="evidence" value="ECO:0007669"/>
    <property type="project" value="UniProtKB-UniRule"/>
</dbReference>
<dbReference type="Gene3D" id="4.10.830.30">
    <property type="entry name" value="Ribosomal protein L31"/>
    <property type="match status" value="1"/>
</dbReference>
<dbReference type="HAMAP" id="MF_00501">
    <property type="entry name" value="Ribosomal_bL31_1"/>
    <property type="match status" value="1"/>
</dbReference>
<dbReference type="InterPro" id="IPR034704">
    <property type="entry name" value="Ribosomal_bL28/bL31-like_sf"/>
</dbReference>
<dbReference type="InterPro" id="IPR002150">
    <property type="entry name" value="Ribosomal_bL31"/>
</dbReference>
<dbReference type="InterPro" id="IPR027491">
    <property type="entry name" value="Ribosomal_bL31_A"/>
</dbReference>
<dbReference type="InterPro" id="IPR042105">
    <property type="entry name" value="Ribosomal_bL31_sf"/>
</dbReference>
<dbReference type="NCBIfam" id="TIGR00105">
    <property type="entry name" value="L31"/>
    <property type="match status" value="1"/>
</dbReference>
<dbReference type="NCBIfam" id="NF000612">
    <property type="entry name" value="PRK00019.1"/>
    <property type="match status" value="1"/>
</dbReference>
<dbReference type="NCBIfam" id="NF001809">
    <property type="entry name" value="PRK00528.1"/>
    <property type="match status" value="1"/>
</dbReference>
<dbReference type="PANTHER" id="PTHR33280">
    <property type="entry name" value="50S RIBOSOMAL PROTEIN L31, CHLOROPLASTIC"/>
    <property type="match status" value="1"/>
</dbReference>
<dbReference type="PANTHER" id="PTHR33280:SF6">
    <property type="entry name" value="LARGE RIBOSOMAL SUBUNIT PROTEIN BL31A"/>
    <property type="match status" value="1"/>
</dbReference>
<dbReference type="Pfam" id="PF01197">
    <property type="entry name" value="Ribosomal_L31"/>
    <property type="match status" value="1"/>
</dbReference>
<dbReference type="PRINTS" id="PR01249">
    <property type="entry name" value="RIBOSOMALL31"/>
</dbReference>
<dbReference type="SUPFAM" id="SSF143800">
    <property type="entry name" value="L28p-like"/>
    <property type="match status" value="1"/>
</dbReference>
<dbReference type="PROSITE" id="PS01143">
    <property type="entry name" value="RIBOSOMAL_L31"/>
    <property type="match status" value="1"/>
</dbReference>
<sequence>MKTGIHPNYAEITATCTCGNIIKVNSTAGKNLHLDVCGACHPFYTGTQKVVDTGGRIDKFNKRFGMLGKK</sequence>
<accession>Q07WM9</accession>
<comment type="function">
    <text evidence="1">Binds the 23S rRNA.</text>
</comment>
<comment type="cofactor">
    <cofactor evidence="1">
        <name>Zn(2+)</name>
        <dbReference type="ChEBI" id="CHEBI:29105"/>
    </cofactor>
    <text evidence="1">Binds 1 zinc ion per subunit.</text>
</comment>
<comment type="subunit">
    <text evidence="1">Part of the 50S ribosomal subunit.</text>
</comment>
<comment type="similarity">
    <text evidence="1">Belongs to the bacterial ribosomal protein bL31 family. Type A subfamily.</text>
</comment>
<gene>
    <name evidence="1" type="primary">rpmE</name>
    <name type="ordered locus">Sfri_3758</name>
</gene>
<protein>
    <recommendedName>
        <fullName evidence="1">Large ribosomal subunit protein bL31</fullName>
    </recommendedName>
    <alternativeName>
        <fullName evidence="2">50S ribosomal protein L31</fullName>
    </alternativeName>
</protein>
<organism>
    <name type="scientific">Shewanella frigidimarina (strain NCIMB 400)</name>
    <dbReference type="NCBI Taxonomy" id="318167"/>
    <lineage>
        <taxon>Bacteria</taxon>
        <taxon>Pseudomonadati</taxon>
        <taxon>Pseudomonadota</taxon>
        <taxon>Gammaproteobacteria</taxon>
        <taxon>Alteromonadales</taxon>
        <taxon>Shewanellaceae</taxon>
        <taxon>Shewanella</taxon>
    </lineage>
</organism>
<feature type="chain" id="PRO_1000126731" description="Large ribosomal subunit protein bL31">
    <location>
        <begin position="1"/>
        <end position="70"/>
    </location>
</feature>
<feature type="binding site" evidence="1">
    <location>
        <position position="16"/>
    </location>
    <ligand>
        <name>Zn(2+)</name>
        <dbReference type="ChEBI" id="CHEBI:29105"/>
    </ligand>
</feature>
<feature type="binding site" evidence="1">
    <location>
        <position position="18"/>
    </location>
    <ligand>
        <name>Zn(2+)</name>
        <dbReference type="ChEBI" id="CHEBI:29105"/>
    </ligand>
</feature>
<feature type="binding site" evidence="1">
    <location>
        <position position="37"/>
    </location>
    <ligand>
        <name>Zn(2+)</name>
        <dbReference type="ChEBI" id="CHEBI:29105"/>
    </ligand>
</feature>
<feature type="binding site" evidence="1">
    <location>
        <position position="40"/>
    </location>
    <ligand>
        <name>Zn(2+)</name>
        <dbReference type="ChEBI" id="CHEBI:29105"/>
    </ligand>
</feature>
<name>RL31_SHEFN</name>
<keyword id="KW-0479">Metal-binding</keyword>
<keyword id="KW-1185">Reference proteome</keyword>
<keyword id="KW-0687">Ribonucleoprotein</keyword>
<keyword id="KW-0689">Ribosomal protein</keyword>
<keyword id="KW-0694">RNA-binding</keyword>
<keyword id="KW-0699">rRNA-binding</keyword>
<keyword id="KW-0862">Zinc</keyword>